<name>CLD18_MOUSE</name>
<reference key="1">
    <citation type="journal article" date="2001" name="Mol. Cell. Biol.">
        <title>Claudin-18, a novel downstream target gene for the T/EBP/NKX2.1 homeodomain transcription factor, encodes lung- and stomach-specific isoforms through alternative splicing.</title>
        <authorList>
            <person name="Niimi T."/>
            <person name="Nagashima K."/>
            <person name="Ward J.M."/>
            <person name="Minoo P."/>
            <person name="Zimonjic D.B."/>
            <person name="Popescu N.C."/>
            <person name="Kimura S."/>
        </authorList>
    </citation>
    <scope>NUCLEOTIDE SEQUENCE [MRNA]</scope>
    <scope>SUBCELLULAR LOCATION</scope>
    <scope>TISSUE SPECIFICITY (ISOFORMS A1.1; A1.2; A2.1 AND A2.2)</scope>
    <scope>ALTERNATIVE SPLICING</scope>
</reference>
<reference key="2">
    <citation type="journal article" date="2009" name="Proc. Natl. Acad. Sci. U.S.A.">
        <title>Claudin-16 and claudin-19 interaction is required for their assembly into tight junctions and for renal reabsorption of magnesium.</title>
        <authorList>
            <person name="Hou J."/>
            <person name="Renigunta A."/>
            <person name="Gomes A.S."/>
            <person name="Hou M."/>
            <person name="Paul D.L."/>
            <person name="Waldegger S."/>
            <person name="Goodenough D.A."/>
        </authorList>
    </citation>
    <scope>INTERACTION WITH CLDN19 (ISOFORM A2.1)</scope>
</reference>
<reference key="3">
    <citation type="journal article" date="2010" name="Cell">
        <title>A tissue-specific atlas of mouse protein phosphorylation and expression.</title>
        <authorList>
            <person name="Huttlin E.L."/>
            <person name="Jedrychowski M.P."/>
            <person name="Elias J.E."/>
            <person name="Goswami T."/>
            <person name="Rad R."/>
            <person name="Beausoleil S.A."/>
            <person name="Villen J."/>
            <person name="Haas W."/>
            <person name="Sowa M.E."/>
            <person name="Gygi S.P."/>
        </authorList>
    </citation>
    <scope>PHOSPHORYLATION [LARGE SCALE ANALYSIS] AT SER-217</scope>
    <scope>IDENTIFICATION BY MASS SPECTROMETRY [LARGE SCALE ANALYSIS]</scope>
    <source>
        <tissue>Lung</tissue>
    </source>
</reference>
<reference key="4">
    <citation type="journal article" date="2012" name="Gastroenterology">
        <title>Deficiency of claudin-18 causes paracellular H+ leakage, up-regulation of interleukin-1beta, and atrophic gastritis in mice.</title>
        <authorList>
            <person name="Hayashi D."/>
            <person name="Tamura A."/>
            <person name="Tanaka H."/>
            <person name="Yamazaki Y."/>
            <person name="Watanabe S."/>
            <person name="Suzuki K."/>
            <person name="Suzuki K."/>
            <person name="Sentani K."/>
            <person name="Yasui W."/>
            <person name="Rakugi H."/>
            <person name="Isaka Y."/>
            <person name="Tsukita S."/>
        </authorList>
    </citation>
    <scope>FUNCTION (ISOFORM A2.1)</scope>
    <scope>SUBCELLULAR LOCATION (ISOFORMS A1.1 AND A2.1)</scope>
    <scope>TISSUE SPECIFICITY (ISOFORMS A1.1 AND A2.1)</scope>
    <scope>DISRUPTION PHENOTYPE (ISOFORM A2.1)</scope>
</reference>
<reference key="5">
    <citation type="journal article" date="2012" name="J. Bone Miner. Res.">
        <title>Claudin 18 is a novel negative regulator of bone resorption and osteoclast differentiation.</title>
        <authorList>
            <person name="Linares G.R."/>
            <person name="Brommage R."/>
            <person name="Powell D.R."/>
            <person name="Xing W."/>
            <person name="Chen S.T."/>
            <person name="Alshbool F.Z."/>
            <person name="Lau K.H."/>
            <person name="Wergedal J.E."/>
            <person name="Mohan S."/>
        </authorList>
    </citation>
    <scope>FUNCTION</scope>
    <scope>INTERACTION WITH TJP2</scope>
    <scope>TISSUE SPECIFICITY (ISOFORMS A1.1 AND A2.1)</scope>
    <scope>DISRUPTION PHENOTYPE</scope>
</reference>
<reference key="6">
    <citation type="journal article" date="2013" name="Am. J. Physiol.">
        <title>Disruption of claudin-18 diminishes ovariectomy-induced bone loss in mice.</title>
        <authorList>
            <person name="Kim H.Y."/>
            <person name="Alarcon C."/>
            <person name="Pourteymour S."/>
            <person name="Wergedal J.E."/>
            <person name="Mohan S."/>
        </authorList>
    </citation>
    <scope>FUNCTION</scope>
    <scope>INDUCTION BY 17-BETA-ESTRADIOL</scope>
    <scope>DISRUPTION PHENOTYPE</scope>
</reference>
<reference key="7">
    <citation type="journal article" date="2014" name="Am. J. Respir. Cell Mol. Biol.">
        <title>Knockout mice reveal key roles for claudin 18 in alveolar barrier properties and fluid homeostasis.</title>
        <authorList>
            <person name="Li G."/>
            <person name="Flodby P."/>
            <person name="Luo J."/>
            <person name="Kage H."/>
            <person name="Sipos A."/>
            <person name="Gao D."/>
            <person name="Ji Y."/>
            <person name="Beard L.L."/>
            <person name="Marconett C.N."/>
            <person name="DeMaio L."/>
            <person name="Kim Y.H."/>
            <person name="Kim K.J."/>
            <person name="Laird-Offringa I.A."/>
            <person name="Minoo P."/>
            <person name="Liebler J.M."/>
            <person name="Zhou B."/>
            <person name="Crandall E.D."/>
            <person name="Borok Z."/>
        </authorList>
    </citation>
    <scope>FUNCTION</scope>
    <scope>DISRUPTION PHENOTYPE</scope>
</reference>
<reference key="8">
    <citation type="journal article" date="2014" name="Am. J. Respir. Cell Mol. Biol.">
        <title>Claudin-18 deficiency results in alveolar barrier dysfunction and impaired alveologenesis in mice.</title>
        <authorList>
            <person name="LaFemina M.J."/>
            <person name="Sutherland K.M."/>
            <person name="Bentley T."/>
            <person name="Gonzales L.W."/>
            <person name="Allen L."/>
            <person name="Chapin C.J."/>
            <person name="Rokkam D."/>
            <person name="Sweerus K.A."/>
            <person name="Dobbs L.G."/>
            <person name="Ballard P.L."/>
            <person name="Frank J.A."/>
        </authorList>
    </citation>
    <scope>FUNCTION</scope>
    <scope>TISSUE SPECIFICITY</scope>
    <scope>DEVELOPMENTAL STAGE</scope>
    <scope>DISRUPTION PHENOTYPE</scope>
</reference>
<reference key="9">
    <citation type="journal article" date="2018" name="J. Clin. Invest.">
        <title>Claudin-18-mediated YAP activity regulates lung stem and progenitor cell homeostasis and tumorigenesis.</title>
        <authorList>
            <person name="Zhou B."/>
            <person name="Flodby P."/>
            <person name="Luo J."/>
            <person name="Castillo D.R."/>
            <person name="Liu Y."/>
            <person name="Yu F.X."/>
            <person name="McConnell A."/>
            <person name="Varghese B."/>
            <person name="Li G."/>
            <person name="Chimge N.O."/>
            <person name="Sunohara M."/>
            <person name="Koss M.N."/>
            <person name="Elatre W."/>
            <person name="Conti P."/>
            <person name="Liebler J.M."/>
            <person name="Yang C."/>
            <person name="Marconett C.N."/>
            <person name="Laird-Offringa I.A."/>
            <person name="Minoo P."/>
            <person name="Guan K."/>
            <person name="Stripp B.R."/>
            <person name="Crandall E.D."/>
            <person name="Borok Z."/>
        </authorList>
    </citation>
    <scope>FUNCTION</scope>
    <scope>INTERACTION WITH TJP1 AND YAP1</scope>
    <scope>SUBCELLULAR LOCATION</scope>
    <scope>TISSUE SPECIFICITY</scope>
    <scope>DISRUPTION PHENOTYPE</scope>
</reference>
<reference key="10">
    <citation type="journal article" date="2021" name="Sci. Rep.">
        <title>Deficiency of lung-specific claudin-18 leads to aggravated infection with Cryptococcus deneoformans through dysregulation of the microenvironment in lungs.</title>
        <authorList>
            <person name="Sato K."/>
            <person name="Matsumoto I."/>
            <person name="Suzuki K."/>
            <person name="Tamura A."/>
            <person name="Shiraishi A."/>
            <person name="Kiyonari H."/>
            <person name="Kasamatsu J."/>
            <person name="Yamamoto H."/>
            <person name="Miyasaka T."/>
            <person name="Tanno D."/>
            <person name="Miyahara A."/>
            <person name="Zong T."/>
            <person name="Kagesawa T."/>
            <person name="Oniyama A."/>
            <person name="Kawamura K."/>
            <person name="Kitai Y."/>
            <person name="Umeki A."/>
            <person name="Kanno E."/>
            <person name="Tanno H."/>
            <person name="Ishii K."/>
            <person name="Tsukita S."/>
            <person name="Kawakami K."/>
        </authorList>
    </citation>
    <scope>FUNCTION (ISOFORM A1.1)</scope>
    <scope>DISRUPTION PHENOTYPE (ISOFORM A1.1)</scope>
</reference>
<proteinExistence type="evidence at protein level"/>
<accession>P56857</accession>
<accession>Q91ZY9</accession>
<accession>Q91ZZ0</accession>
<accession>Q91ZZ1</accession>
<keyword id="KW-0025">Alternative splicing</keyword>
<keyword id="KW-0965">Cell junction</keyword>
<keyword id="KW-1003">Cell membrane</keyword>
<keyword id="KW-0472">Membrane</keyword>
<keyword id="KW-0597">Phosphoprotein</keyword>
<keyword id="KW-1185">Reference proteome</keyword>
<keyword id="KW-0796">Tight junction</keyword>
<keyword id="KW-0812">Transmembrane</keyword>
<keyword id="KW-1133">Transmembrane helix</keyword>
<evidence type="ECO:0000255" key="1"/>
<evidence type="ECO:0000256" key="2">
    <source>
        <dbReference type="SAM" id="MobiDB-lite"/>
    </source>
</evidence>
<evidence type="ECO:0000269" key="3">
    <source>
    </source>
</evidence>
<evidence type="ECO:0000269" key="4">
    <source>
    </source>
</evidence>
<evidence type="ECO:0000269" key="5">
    <source>
    </source>
</evidence>
<evidence type="ECO:0000269" key="6">
    <source>
    </source>
</evidence>
<evidence type="ECO:0000269" key="7">
    <source>
    </source>
</evidence>
<evidence type="ECO:0000269" key="8">
    <source>
    </source>
</evidence>
<evidence type="ECO:0000269" key="9">
    <source>
    </source>
</evidence>
<evidence type="ECO:0000269" key="10">
    <source>
    </source>
</evidence>
<evidence type="ECO:0000269" key="11">
    <source>
    </source>
</evidence>
<evidence type="ECO:0000303" key="12">
    <source>
    </source>
</evidence>
<evidence type="ECO:0000305" key="13"/>
<evidence type="ECO:0007744" key="14">
    <source>
    </source>
</evidence>
<feature type="chain" id="PRO_0000457666" description="Claudin-18">
    <location>
        <begin position="1"/>
        <end position="264"/>
    </location>
</feature>
<feature type="topological domain" description="Cytoplasmic" evidence="1">
    <location>
        <begin position="1"/>
        <end position="6"/>
    </location>
</feature>
<feature type="transmembrane region" description="Helical" evidence="1">
    <location>
        <begin position="7"/>
        <end position="27"/>
    </location>
</feature>
<feature type="topological domain" description="Extracellular" evidence="1">
    <location>
        <begin position="28"/>
        <end position="80"/>
    </location>
</feature>
<feature type="transmembrane region" description="Helical" evidence="1">
    <location>
        <begin position="81"/>
        <end position="101"/>
    </location>
</feature>
<feature type="topological domain" description="Cytoplasmic" evidence="1">
    <location>
        <begin position="102"/>
        <end position="122"/>
    </location>
</feature>
<feature type="transmembrane region" description="Helical" evidence="1">
    <location>
        <begin position="123"/>
        <end position="143"/>
    </location>
</feature>
<feature type="topological domain" description="Extracellular" evidence="1">
    <location>
        <begin position="144"/>
        <end position="176"/>
    </location>
</feature>
<feature type="transmembrane region" description="Helical" evidence="1">
    <location>
        <begin position="177"/>
        <end position="197"/>
    </location>
</feature>
<feature type="topological domain" description="Cytoplasmic" evidence="1">
    <location>
        <begin position="198"/>
        <end position="264"/>
    </location>
</feature>
<feature type="region of interest" description="Required for role in regulation of RANKL-induced osteoclast differentiation" evidence="6">
    <location>
        <begin position="198"/>
        <end position="264"/>
    </location>
</feature>
<feature type="region of interest" description="Disordered" evidence="2">
    <location>
        <begin position="241"/>
        <end position="264"/>
    </location>
</feature>
<feature type="compositionally biased region" description="Basic and acidic residues" evidence="2">
    <location>
        <begin position="242"/>
        <end position="264"/>
    </location>
</feature>
<feature type="modified residue" description="Phosphoserine" evidence="14">
    <location>
        <position position="217"/>
    </location>
</feature>
<feature type="splice variant" id="VSP_001103" description="In isoform A2.1 and isoform A2.2." evidence="13">
    <original>MATTTCQVVGLLLSLLGLAGCIAATGMDMWSTQDLYDNPVTAVFQYEGLWRSCVQQSSGFTECRPYFTI</original>
    <variation>MSVTACQGLGFVVSLIGFAGIIAATCMDQWSTQDLYNNPVTAVFNYQGLWRSCVRESSGFTECRGYFTL</variation>
    <location>
        <begin position="1"/>
        <end position="69"/>
    </location>
</feature>
<feature type="splice variant" id="VSP_001104" description="In isoform A1.2 and isoform A2.2." evidence="13">
    <original>N</original>
    <variation>K</variation>
    <location>
        <position position="208"/>
    </location>
</feature>
<feature type="splice variant" id="VSP_001105" description="In isoform A1.2 and isoform A2.2." evidence="13">
    <location>
        <begin position="209"/>
        <end position="264"/>
    </location>
</feature>
<sequence>MATTTCQVVGLLLSLLGLAGCIAATGMDMWSTQDLYDNPVTAVFQYEGLWRSCVQQSSGFTECRPYFTILGLPAMLQAVRALMIVGIVLGVIGILVSIFALKCIRIGSMDDSAKAKMTLTSGILFIISGICAIIGVSVFANMLVTNFWMSTANMYSGMGGMGGMVQTVQTRYTFGAALFVGWVAGGLTLIGGVMMCIACRGLTPDDSNFKAVSYHASGQNVAYRPGGFKASTGFGSNTRNKKIYDGGARTEDDEQSHPTKYDYV</sequence>
<gene>
    <name type="primary">Cldn18</name>
</gene>
<dbReference type="EMBL" id="AF221068">
    <property type="protein sequence ID" value="AAF26447.1"/>
    <property type="molecule type" value="mRNA"/>
</dbReference>
<dbReference type="EMBL" id="AF349450">
    <property type="protein sequence ID" value="AAL15635.1"/>
    <property type="molecule type" value="mRNA"/>
</dbReference>
<dbReference type="EMBL" id="AF349451">
    <property type="protein sequence ID" value="AAL15636.1"/>
    <property type="molecule type" value="mRNA"/>
</dbReference>
<dbReference type="EMBL" id="AF349453">
    <property type="protein sequence ID" value="AAL15638.1"/>
    <property type="molecule type" value="mRNA"/>
</dbReference>
<dbReference type="CCDS" id="CCDS23437.1">
    <molecule id="P56857-1"/>
</dbReference>
<dbReference type="CCDS" id="CCDS57692.1">
    <molecule id="P56857-2"/>
</dbReference>
<dbReference type="CCDS" id="CCDS57693.1">
    <molecule id="P56857-4"/>
</dbReference>
<dbReference type="CCDS" id="CCDS57694.1">
    <molecule id="P56857-3"/>
</dbReference>
<dbReference type="RefSeq" id="NP_001181850.1">
    <molecule id="P56857-3"/>
    <property type="nucleotide sequence ID" value="NM_001194921.1"/>
</dbReference>
<dbReference type="RefSeq" id="NP_001181851.1">
    <molecule id="P56857-2"/>
    <property type="nucleotide sequence ID" value="NM_001194922.1"/>
</dbReference>
<dbReference type="RefSeq" id="NP_001181852.1">
    <molecule id="P56857-4"/>
    <property type="nucleotide sequence ID" value="NM_001194923.1"/>
</dbReference>
<dbReference type="RefSeq" id="NP_062789.1">
    <molecule id="P56857-1"/>
    <property type="nucleotide sequence ID" value="NM_019815.3"/>
</dbReference>
<dbReference type="SMR" id="P56857"/>
<dbReference type="DIP" id="DIP-48956N"/>
<dbReference type="FunCoup" id="P56857">
    <property type="interactions" value="272"/>
</dbReference>
<dbReference type="IntAct" id="P56857">
    <property type="interactions" value="2"/>
</dbReference>
<dbReference type="STRING" id="10090.ENSMUSP00000035048"/>
<dbReference type="TCDB" id="1.H.1.1.8">
    <property type="family name" value="the claudin tight junction (claudin1) family"/>
</dbReference>
<dbReference type="iPTMnet" id="P56857"/>
<dbReference type="PhosphoSitePlus" id="P56857"/>
<dbReference type="PaxDb" id="10090-ENSMUSP00000035048"/>
<dbReference type="ProteomicsDB" id="285482">
    <molecule id="P56857-1"/>
</dbReference>
<dbReference type="ProteomicsDB" id="285483">
    <molecule id="P56857-2"/>
</dbReference>
<dbReference type="ProteomicsDB" id="285484">
    <molecule id="P56857-3"/>
</dbReference>
<dbReference type="ProteomicsDB" id="285485">
    <molecule id="P56857-4"/>
</dbReference>
<dbReference type="Antibodypedia" id="4575">
    <property type="antibodies" value="280 antibodies from 33 providers"/>
</dbReference>
<dbReference type="DNASU" id="56492"/>
<dbReference type="Ensembl" id="ENSMUST00000035048.12">
    <molecule id="P56857-1"/>
    <property type="protein sequence ID" value="ENSMUSP00000035048.6"/>
    <property type="gene ID" value="ENSMUSG00000032473.14"/>
</dbReference>
<dbReference type="Ensembl" id="ENSMUST00000112882.9">
    <molecule id="P56857-3"/>
    <property type="protein sequence ID" value="ENSMUSP00000108503.3"/>
    <property type="gene ID" value="ENSMUSG00000032473.14"/>
</dbReference>
<dbReference type="Ensembl" id="ENSMUST00000131922.2">
    <molecule id="P56857-4"/>
    <property type="protein sequence ID" value="ENSMUSP00000117382.2"/>
    <property type="gene ID" value="ENSMUSG00000032473.14"/>
</dbReference>
<dbReference type="Ensembl" id="ENSMUST00000136429.8">
    <molecule id="P56857-2"/>
    <property type="protein sequence ID" value="ENSMUSP00000115782.2"/>
    <property type="gene ID" value="ENSMUSG00000032473.14"/>
</dbReference>
<dbReference type="GeneID" id="56492"/>
<dbReference type="KEGG" id="mmu:56492"/>
<dbReference type="UCSC" id="uc009rep.2">
    <molecule id="P56857-1"/>
    <property type="organism name" value="mouse"/>
</dbReference>
<dbReference type="UCSC" id="uc009req.2">
    <molecule id="P56857-2"/>
    <property type="organism name" value="mouse"/>
</dbReference>
<dbReference type="UCSC" id="uc009rer.2">
    <molecule id="P56857-4"/>
    <property type="organism name" value="mouse"/>
</dbReference>
<dbReference type="UCSC" id="uc009res.2">
    <molecule id="P56857-3"/>
    <property type="organism name" value="mouse"/>
</dbReference>
<dbReference type="AGR" id="MGI:1929209"/>
<dbReference type="CTD" id="51208"/>
<dbReference type="MGI" id="MGI:1929209">
    <property type="gene designation" value="Cldn18"/>
</dbReference>
<dbReference type="VEuPathDB" id="HostDB:ENSMUSG00000032473"/>
<dbReference type="eggNOG" id="ENOG502QTRB">
    <property type="taxonomic scope" value="Eukaryota"/>
</dbReference>
<dbReference type="GeneTree" id="ENSGT00940000158655"/>
<dbReference type="HOGENOM" id="CLU_076370_2_1_1"/>
<dbReference type="InParanoid" id="P56857"/>
<dbReference type="OMA" id="TICQVMG"/>
<dbReference type="OrthoDB" id="8795554at2759"/>
<dbReference type="PhylomeDB" id="P56857"/>
<dbReference type="TreeFam" id="TF331936"/>
<dbReference type="BioGRID-ORCS" id="56492">
    <property type="hits" value="1 hit in 78 CRISPR screens"/>
</dbReference>
<dbReference type="PRO" id="PR:P56857"/>
<dbReference type="Proteomes" id="UP000000589">
    <property type="component" value="Chromosome 9"/>
</dbReference>
<dbReference type="RNAct" id="P56857">
    <property type="molecule type" value="protein"/>
</dbReference>
<dbReference type="Bgee" id="ENSMUSG00000032473">
    <property type="expression patterns" value="Expressed in mucous cell of stomach and 26 other cell types or tissues"/>
</dbReference>
<dbReference type="GO" id="GO:0005923">
    <property type="term" value="C:bicellular tight junction"/>
    <property type="evidence" value="ECO:0000250"/>
    <property type="project" value="UniProtKB"/>
</dbReference>
<dbReference type="GO" id="GO:0005911">
    <property type="term" value="C:cell-cell junction"/>
    <property type="evidence" value="ECO:0000314"/>
    <property type="project" value="UniProtKB"/>
</dbReference>
<dbReference type="GO" id="GO:0016328">
    <property type="term" value="C:lateral plasma membrane"/>
    <property type="evidence" value="ECO:0007669"/>
    <property type="project" value="UniProtKB-SubCell"/>
</dbReference>
<dbReference type="GO" id="GO:0005886">
    <property type="term" value="C:plasma membrane"/>
    <property type="evidence" value="ECO:0000314"/>
    <property type="project" value="UniProtKB"/>
</dbReference>
<dbReference type="GO" id="GO:0070160">
    <property type="term" value="C:tight junction"/>
    <property type="evidence" value="ECO:0000314"/>
    <property type="project" value="UniProtKB"/>
</dbReference>
<dbReference type="GO" id="GO:0042802">
    <property type="term" value="F:identical protein binding"/>
    <property type="evidence" value="ECO:0000250"/>
    <property type="project" value="UniProtKB"/>
</dbReference>
<dbReference type="GO" id="GO:0005198">
    <property type="term" value="F:structural molecule activity"/>
    <property type="evidence" value="ECO:0007669"/>
    <property type="project" value="InterPro"/>
</dbReference>
<dbReference type="GO" id="GO:0016338">
    <property type="term" value="P:calcium-independent cell-cell adhesion via plasma membrane cell-adhesion molecules"/>
    <property type="evidence" value="ECO:0000250"/>
    <property type="project" value="UniProtKB"/>
</dbReference>
<dbReference type="GO" id="GO:0071391">
    <property type="term" value="P:cellular response to estrogen stimulus"/>
    <property type="evidence" value="ECO:0000315"/>
    <property type="project" value="UniProtKB"/>
</dbReference>
<dbReference type="GO" id="GO:0048565">
    <property type="term" value="P:digestive tract development"/>
    <property type="evidence" value="ECO:0000315"/>
    <property type="project" value="MGI"/>
</dbReference>
<dbReference type="GO" id="GO:0050673">
    <property type="term" value="P:epithelial cell proliferation"/>
    <property type="evidence" value="ECO:0000315"/>
    <property type="project" value="UniProtKB"/>
</dbReference>
<dbReference type="GO" id="GO:0042045">
    <property type="term" value="P:epithelial fluid transport"/>
    <property type="evidence" value="ECO:0000315"/>
    <property type="project" value="UniProtKB"/>
</dbReference>
<dbReference type="GO" id="GO:0048286">
    <property type="term" value="P:lung alveolus development"/>
    <property type="evidence" value="ECO:0000315"/>
    <property type="project" value="UniProtKB"/>
</dbReference>
<dbReference type="GO" id="GO:0045779">
    <property type="term" value="P:negative regulation of bone resorption"/>
    <property type="evidence" value="ECO:0000314"/>
    <property type="project" value="MGI"/>
</dbReference>
<dbReference type="GO" id="GO:2001205">
    <property type="term" value="P:negative regulation of osteoclast development"/>
    <property type="evidence" value="ECO:0000314"/>
    <property type="project" value="MGI"/>
</dbReference>
<dbReference type="GO" id="GO:1900181">
    <property type="term" value="P:negative regulation of protein localization to nucleus"/>
    <property type="evidence" value="ECO:0000314"/>
    <property type="project" value="MGI"/>
</dbReference>
<dbReference type="GO" id="GO:0010804">
    <property type="term" value="P:negative regulation of tumor necrosis factor-mediated signaling pathway"/>
    <property type="evidence" value="ECO:0000315"/>
    <property type="project" value="MGI"/>
</dbReference>
<dbReference type="GO" id="GO:0035265">
    <property type="term" value="P:organ growth"/>
    <property type="evidence" value="ECO:0000315"/>
    <property type="project" value="UniProtKB"/>
</dbReference>
<dbReference type="GO" id="GO:0034504">
    <property type="term" value="P:protein localization to nucleus"/>
    <property type="evidence" value="ECO:0000314"/>
    <property type="project" value="MGI"/>
</dbReference>
<dbReference type="GO" id="GO:0045471">
    <property type="term" value="P:response to ethanol"/>
    <property type="evidence" value="ECO:0007669"/>
    <property type="project" value="Ensembl"/>
</dbReference>
<dbReference type="GO" id="GO:0120192">
    <property type="term" value="P:tight junction assembly"/>
    <property type="evidence" value="ECO:0000315"/>
    <property type="project" value="UniProtKB"/>
</dbReference>
<dbReference type="GO" id="GO:0120193">
    <property type="term" value="P:tight junction organization"/>
    <property type="evidence" value="ECO:0000315"/>
    <property type="project" value="UniProtKB"/>
</dbReference>
<dbReference type="FunFam" id="1.20.140.150:FF:000027">
    <property type="entry name" value="Claudin"/>
    <property type="match status" value="1"/>
</dbReference>
<dbReference type="Gene3D" id="1.20.140.150">
    <property type="match status" value="1"/>
</dbReference>
<dbReference type="InterPro" id="IPR006187">
    <property type="entry name" value="Claudin"/>
</dbReference>
<dbReference type="InterPro" id="IPR003928">
    <property type="entry name" value="Claudin18"/>
</dbReference>
<dbReference type="InterPro" id="IPR017974">
    <property type="entry name" value="Claudin_CS"/>
</dbReference>
<dbReference type="InterPro" id="IPR004031">
    <property type="entry name" value="PMP22/EMP/MP20/Claudin"/>
</dbReference>
<dbReference type="PANTHER" id="PTHR12002">
    <property type="entry name" value="CLAUDIN"/>
    <property type="match status" value="1"/>
</dbReference>
<dbReference type="Pfam" id="PF00822">
    <property type="entry name" value="PMP22_Claudin"/>
    <property type="match status" value="1"/>
</dbReference>
<dbReference type="PRINTS" id="PR01077">
    <property type="entry name" value="CLAUDIN"/>
</dbReference>
<dbReference type="PRINTS" id="PR01448">
    <property type="entry name" value="CLAUDIN18"/>
</dbReference>
<dbReference type="PROSITE" id="PS01346">
    <property type="entry name" value="CLAUDIN"/>
    <property type="match status" value="1"/>
</dbReference>
<protein>
    <recommendedName>
        <fullName>Claudin-18</fullName>
    </recommendedName>
</protein>
<organism>
    <name type="scientific">Mus musculus</name>
    <name type="common">Mouse</name>
    <dbReference type="NCBI Taxonomy" id="10090"/>
    <lineage>
        <taxon>Eukaryota</taxon>
        <taxon>Metazoa</taxon>
        <taxon>Chordata</taxon>
        <taxon>Craniata</taxon>
        <taxon>Vertebrata</taxon>
        <taxon>Euteleostomi</taxon>
        <taxon>Mammalia</taxon>
        <taxon>Eutheria</taxon>
        <taxon>Euarchontoglires</taxon>
        <taxon>Glires</taxon>
        <taxon>Rodentia</taxon>
        <taxon>Myomorpha</taxon>
        <taxon>Muroidea</taxon>
        <taxon>Muridae</taxon>
        <taxon>Murinae</taxon>
        <taxon>Mus</taxon>
        <taxon>Mus</taxon>
    </lineage>
</organism>
<comment type="function">
    <text evidence="6 7 8 9 10">Involved in alveolar fluid homeostasis via regulation of alveolar epithelial tight junction composition and therefore ion transport and solute permeability, potentially via downstream regulation of the actin cytoskeleton organization and beta-2-adrenergic signaling (PubMed:24588076). Required for lung alveolarization and maintenance of the paracellular alveolar epithelial barrier (PubMed:24787463). Acts to maintain epithelial progenitor cell proliferation and organ size, via regulation of YAP1 localization away from the nucleus and thereby restriction of YAP1 target gene transcription (PubMed:29400695). Acts as a negative regulator of RANKL-induced osteoclast differentiation, potentially via relocation of TJP2/ZO-2 away from the nucleus, subsequently involved in bone resorption in response to calcium deficiency (PubMed:22437732). Mediates the osteoprotective effects of estrogen, potentially via acting downstream of estrogen signaling independently of RANKL signaling pathways (PubMed:23299504).</text>
</comment>
<comment type="function">
    <molecule>Isoform A1.1</molecule>
    <text evidence="11">Involved in the maintenance of homeostasis of the alveolar microenvironment via regulation of pH and subsequent T-cell activation in the alveolar space, is therefore indirectly involved in limiting C.neoformans infection.</text>
</comment>
<comment type="function">
    <molecule>Isoform A2.1</molecule>
    <text evidence="5">Required for the formation of the gastric paracellular barrier via its role in tight junction formation, thereby involved in the response to gastric acidification.</text>
</comment>
<comment type="subunit">
    <text evidence="6 10">Interacts with TJP2/ZO-2 (PubMed:22437732). Interacts with TJP1/ZO-1 (PubMed:29400695). Interacts with YAP1 (phosphorylated); the interaction sequesters YAP1 away from the nucleus and thereby restricts transcription of YAP1 target genes (PubMed:29400695).</text>
</comment>
<comment type="subunit">
    <molecule>Isoform A2.1</molecule>
    <text evidence="4">Interacts with CLDN19.</text>
</comment>
<comment type="subcellular location">
    <subcellularLocation>
        <location evidence="3 10">Cell junction</location>
        <location evidence="3 10">Tight junction</location>
    </subcellularLocation>
    <subcellularLocation>
        <location evidence="3 10">Cell membrane</location>
        <topology evidence="1">Multi-pass membrane protein</topology>
    </subcellularLocation>
    <text evidence="3">Localizes to tight junctions in epithelial cells.</text>
</comment>
<comment type="subcellular location">
    <molecule>Isoform A1.1</molecule>
    <subcellularLocation>
        <location evidence="5">Cell junction</location>
        <location evidence="5">Tight junction</location>
    </subcellularLocation>
</comment>
<comment type="subcellular location">
    <molecule>Isoform A2.1</molecule>
    <subcellularLocation>
        <location evidence="5">Cell junction</location>
        <location evidence="5">Tight junction</location>
    </subcellularLocation>
    <subcellularLocation>
        <location evidence="5">Lateral cell membrane</location>
    </subcellularLocation>
</comment>
<comment type="alternative products">
    <event type="alternative splicing"/>
    <isoform>
        <id>P56857-1</id>
        <name>A1.1</name>
        <name evidence="12">Lung-type</name>
        <sequence type="displayed"/>
    </isoform>
    <isoform>
        <id>P56857-2</id>
        <name>A1.2</name>
        <sequence type="described" ref="VSP_001104 VSP_001105"/>
    </isoform>
    <isoform>
        <id>P56857-3</id>
        <name>A2.1</name>
        <name evidence="12">Stomach-type</name>
        <sequence type="described" ref="VSP_001103"/>
    </isoform>
    <isoform>
        <id>P56857-4</id>
        <name>A2.2</name>
        <sequence type="described" ref="VSP_001103 VSP_001104 VSP_001105"/>
    </isoform>
</comment>
<comment type="tissue specificity">
    <text evidence="9 10">Expressed in the lung (at protein level).</text>
</comment>
<comment type="tissue specificity">
    <molecule>Isoform A1.1</molecule>
    <text evidence="3 5 6">Expressed in lung (PubMed:11585919, PubMed:22437732). Expressed in the stomach (PubMed:22079592).</text>
</comment>
<comment type="tissue specificity">
    <molecule>Isoform A1.2</molecule>
    <text evidence="3">Expressed in lung.</text>
</comment>
<comment type="tissue specificity">
    <molecule>Isoform A2.1</molecule>
    <text evidence="3 5 6">Expressed in stomach (PubMed:11585919, PubMed:22079592, PubMed:22437732). Expressed in bone (PubMed:22437732).</text>
</comment>
<comment type="tissue specificity">
    <molecule>Isoform A2.2</molecule>
    <text evidence="3">Expressed in stomach.</text>
</comment>
<comment type="developmental stage">
    <text evidence="9">Expressed in the lungs from 19 dpc, expression is increased at birth and at four weeks of age.</text>
</comment>
<comment type="induction">
    <text evidence="7">Induced by 17-beta-estradiol in bone marrow stromal cells, osteoblasts and osteoclasts.</text>
</comment>
<comment type="disruption phenotype">
    <text evidence="6 7 8 9 10">Parenchymal expansion phenotype and overall lung enlargement evident from 18 days post-conception (dpc), as a result of increased lung cellularity, airspace enlargement and increase in the number of AT2 cells in the lung alveolar compartments (PubMed:29400695). Increase in AT2 cells in S and G2/M phase of the cell cycle with no change in low levels of apoptosis in the lungs (PubMed:29400695). Increase in bronchoalveolar lavage fluid leakage as a result of alveolar epithelial cell injury at P3 and four weeks of age, resulting in an increase in AT2 cells in the lungs by four weeks of age (PubMed:24787463). Increase in expression of Cldn3 and Cldn4 in lungs at P7 (PubMed:24787463). Fixed alveolar permeability defect and dysregulation of genes involved in lung development in lung tissue, including Areg, Shh, Eln, Vegfa, Fgfr4, and Adm from 4 weeks of age (PubMed:24787463). Impaired alveolarization and decreased lung surface area at four weeks of age (PubMed:24787463). Membrane ruffling and splaying is evident at AT1-AT1 cell junctions at 8 weeks of age (PubMed:24787463). Increase in alveolar fluid clearance and lung permeability (PubMed:24588076). Increase in sodium/potassium-transporting ATPase activity in lungs, accompanied by an increase in Atp1b1 subunit expression, and decreases in Atp1a2, Atp1b3 and Atp1b2 subunit expression (PubMed:24588076). Increase in expression of Cldn3 and Cldn4 in lung tissues with a decrease in Ocln and Egr1 expression in lung tissues (PubMed:24588076). Increase in separation distance between Tjp1/Zo-1 in adjacent cells suggesting tight junction separation (PubMed:24588076). Cytoskeleton rearrangements as evidenced by increased F-actin localization to the plasma membrane and perinuclear actin aggregates with projected radial fibers to the plasma membrane (PubMed:24588076). Decrease in sensitivity to lung injury in response to ventilator-induced lung injury (PubMed:24588076). Increased nuclear localization and protein mobility of Yap1 while phosphorylated Yap1 abundance is decreased in AT2 cells, this results in an increase in Yap1-target genes such as Ccnd1, Areg, Cdk6 and Ccn2/Ctgf at two months of age (PubMed:29400695). Enlargement of the stomach due to increase in gastric mucosal thickness from 2 months of age (PubMed:29400695). Enlargement of the duodenum and kidney from 2 months of age (PubMed:29400695). Histological abnormalities in the gastric mucosa including inflammatory infiltrates and a decrease in the number of well-differentiated gastric chief cells and parietal cells (PubMed:22437732). Reduced total body bone mineral content, total body bone mineral density (BMD), cortical bone thickness, vertebra BMD and femur BMD by 20-25% from 4 to 26 weeks of age (PubMed:22437732, PubMed:23299504). Reduced trabecular bone, trabecular thickness and trabecular number decreased by 50%, whereas trabecular spacing is increased by 50% from 4 to 26 weeks of age (PubMed:22437732). Significant increase in osteoclastogenesis, osteoclast number and number of nuclei in osteoclasts on the surface of the trabecular bone of the proximal tibia (PubMed:22437732). Decrease in bone mass density in the femur, lumbar and whole body (PubMed:22437732). Skeletal defects and osteoclast levels were exacerbated significantly by a calcium depleted diet (PubMed:22437732). Reduction in bone volume to total volume ratio and osteoclast surface to bone surface ratio at 14 weeks of age (PubMed:23299504). Protection against ovariectomy-induced loss of total body, femur and lumbar bone mass density (PubMed:23299504). A 68% increase in incidence of tumors in lungs between 18 and 20 months of age, tumors develop after 10 months of age (PubMed:29400695). Tumors are of a AT2 cell-derived lineage, typically adenocarcinomas with associated alveolar mononuclear cells (PubMed:29400695).</text>
</comment>
<comment type="disruption phenotype">
    <molecule>Isoform A1.1</molecule>
    <text evidence="11">Defective alveolar formation and increased alveolar macrophage counts evident at 6 weeks of age (PubMed:34702961). Increase in C.neoformans fungal burdens in bronchoalveolar lavage fluids (BALF), lung tissue and alveolar space from 1 day post-infection to 14 days post-infection (PubMed:34702961). Increase in multiplication of C.neoformans and poor granulomatous responses in the lung at 14 days post-infection with overall higher infection burdens in the brain and lungs to 28 days post-infection (PubMed:34702961). Increase in neutrophils, alveolar macrophages, inflammatory monocytes, natural killer cells, CD4-positive T-cells, CD8-positive T-cells and natural killer T-cells in BALF 3 days post-C.neoformans infection (PubMed:34702961). Decrease in IFNG in BALF on days 3 and 7 post-infection, similarly a decrease in Il4 and Il13 in BALF on day 14 and in the lungs on day 3 and day 14 post-infection (PubMed:34702961). Decrease in Il17a in BALF on day 7 and in the lungs on day 14 post-infection (PubMed:34702961). Increase in K(+) ion concentration in BALF, with a decrease in pH which persists 7 days post-infection, resulting in the increased replication of C.neoformans (PubMed:34702961).</text>
</comment>
<comment type="disruption phenotype">
    <molecule>Isoform A2.1</molecule>
    <text evidence="5">100% incidence of chronic gastritis with atypical distribution of cells in the gastric gland, including fewer parietal and chief cells that are replaced by metaplastic cells with dilated gland lumina (PubMed:22079592). Lack of increase in stomach lumen acidification with age (PubMed:22079592). Lack of sensitivity to gastric acidity and an increase in ion permeability of the gastric paracellular barrier (PubMed:22079592). Spasmolytic polypeptide-expressing metaplasia cells are dominant in the stomach in place of well-differentiated parietal cells and chief cells (PubMed:22079592). Abundant inflammatory cells in the submucosal region (PubMed:22079592). Slight decrease in the localization of Cldn18 isoform A1.1 at tight junctions in the gastric superficial mucous epithelial cells (PubMed:22079592). Upper apical layer of tight junctions in the stomach missing resulting in a decrease in tight junction width (PubMed:22079592). Increase in proinflammatory markers Il1a and Tnf/Tnf-a, the chemoattractant Cxcl1/Kc and prostaglandin E2 inflammatory marker Ptgs2/Cox2 in gastric tissue (PubMed:22079592).</text>
</comment>
<comment type="miscellaneous">
    <text evidence="10">May act as a tumor suppressor, inhibiting the development of AT2 cell-derived lung tumors.</text>
</comment>
<comment type="similarity">
    <text evidence="13">Belongs to the claudin family.</text>
</comment>